<proteinExistence type="evidence at transcript level"/>
<evidence type="ECO:0000255" key="1"/>
<evidence type="ECO:0000255" key="2">
    <source>
        <dbReference type="PROSITE-ProRule" id="PRU00114"/>
    </source>
</evidence>
<evidence type="ECO:0000305" key="3"/>
<comment type="subcellular location">
    <subcellularLocation>
        <location evidence="3">Membrane</location>
        <topology evidence="3">Single-pass type I membrane protein</topology>
    </subcellularLocation>
</comment>
<comment type="similarity">
    <text evidence="3">Belongs to the FAM187 family.</text>
</comment>
<sequence>MSLAHTTVLLWAWGSLQAFEIVEKESVFQRTPCPAFLVFDNAAYLADMSFELPCHCKPEDVSAVVWYYQKHLGSKRTTVLTDFDGRLLTEAAHVRVGSSMLVRFSIRMFSLLVFRAQPEDTGLYFCGTREGDYFYAYDVDIQSNKEIVASFKDMAQEPLPDEYYGALHVFTTFWEWTPCDRCGVRGEQWRFGLCYLQYPDLSPRYIKTRSAVVSCGSGAVPWKLHLQTKYHTPELQFQSCLVSCQKRNKTRKGVLAIYSYVSKLGSRPWVPQVPIQFHQQRLGHGLIISCPGARPEHAVAWDKDNQPLYRAQYLKGVNRSMRVFIDHGNHLHIRFTQLSDRGIYYCWLQGLKIAGFRLGVITRGRYPASLSDPETRTAIELTLMGYLLITIFFITIHLCRCCCQSRCCPNFSAQTLL</sequence>
<organism>
    <name type="scientific">Mus musculus</name>
    <name type="common">Mouse</name>
    <dbReference type="NCBI Taxonomy" id="10090"/>
    <lineage>
        <taxon>Eukaryota</taxon>
        <taxon>Metazoa</taxon>
        <taxon>Chordata</taxon>
        <taxon>Craniata</taxon>
        <taxon>Vertebrata</taxon>
        <taxon>Euteleostomi</taxon>
        <taxon>Mammalia</taxon>
        <taxon>Eutheria</taxon>
        <taxon>Euarchontoglires</taxon>
        <taxon>Glires</taxon>
        <taxon>Rodentia</taxon>
        <taxon>Myomorpha</taxon>
        <taxon>Muroidea</taxon>
        <taxon>Muridae</taxon>
        <taxon>Murinae</taxon>
        <taxon>Mus</taxon>
        <taxon>Mus</taxon>
    </lineage>
</organism>
<reference key="1">
    <citation type="journal article" date="2005" name="Science">
        <title>The transcriptional landscape of the mammalian genome.</title>
        <authorList>
            <person name="Carninci P."/>
            <person name="Kasukawa T."/>
            <person name="Katayama S."/>
            <person name="Gough J."/>
            <person name="Frith M.C."/>
            <person name="Maeda N."/>
            <person name="Oyama R."/>
            <person name="Ravasi T."/>
            <person name="Lenhard B."/>
            <person name="Wells C."/>
            <person name="Kodzius R."/>
            <person name="Shimokawa K."/>
            <person name="Bajic V.B."/>
            <person name="Brenner S.E."/>
            <person name="Batalov S."/>
            <person name="Forrest A.R."/>
            <person name="Zavolan M."/>
            <person name="Davis M.J."/>
            <person name="Wilming L.G."/>
            <person name="Aidinis V."/>
            <person name="Allen J.E."/>
            <person name="Ambesi-Impiombato A."/>
            <person name="Apweiler R."/>
            <person name="Aturaliya R.N."/>
            <person name="Bailey T.L."/>
            <person name="Bansal M."/>
            <person name="Baxter L."/>
            <person name="Beisel K.W."/>
            <person name="Bersano T."/>
            <person name="Bono H."/>
            <person name="Chalk A.M."/>
            <person name="Chiu K.P."/>
            <person name="Choudhary V."/>
            <person name="Christoffels A."/>
            <person name="Clutterbuck D.R."/>
            <person name="Crowe M.L."/>
            <person name="Dalla E."/>
            <person name="Dalrymple B.P."/>
            <person name="de Bono B."/>
            <person name="Della Gatta G."/>
            <person name="di Bernardo D."/>
            <person name="Down T."/>
            <person name="Engstrom P."/>
            <person name="Fagiolini M."/>
            <person name="Faulkner G."/>
            <person name="Fletcher C.F."/>
            <person name="Fukushima T."/>
            <person name="Furuno M."/>
            <person name="Futaki S."/>
            <person name="Gariboldi M."/>
            <person name="Georgii-Hemming P."/>
            <person name="Gingeras T.R."/>
            <person name="Gojobori T."/>
            <person name="Green R.E."/>
            <person name="Gustincich S."/>
            <person name="Harbers M."/>
            <person name="Hayashi Y."/>
            <person name="Hensch T.K."/>
            <person name="Hirokawa N."/>
            <person name="Hill D."/>
            <person name="Huminiecki L."/>
            <person name="Iacono M."/>
            <person name="Ikeo K."/>
            <person name="Iwama A."/>
            <person name="Ishikawa T."/>
            <person name="Jakt M."/>
            <person name="Kanapin A."/>
            <person name="Katoh M."/>
            <person name="Kawasawa Y."/>
            <person name="Kelso J."/>
            <person name="Kitamura H."/>
            <person name="Kitano H."/>
            <person name="Kollias G."/>
            <person name="Krishnan S.P."/>
            <person name="Kruger A."/>
            <person name="Kummerfeld S.K."/>
            <person name="Kurochkin I.V."/>
            <person name="Lareau L.F."/>
            <person name="Lazarevic D."/>
            <person name="Lipovich L."/>
            <person name="Liu J."/>
            <person name="Liuni S."/>
            <person name="McWilliam S."/>
            <person name="Madan Babu M."/>
            <person name="Madera M."/>
            <person name="Marchionni L."/>
            <person name="Matsuda H."/>
            <person name="Matsuzawa S."/>
            <person name="Miki H."/>
            <person name="Mignone F."/>
            <person name="Miyake S."/>
            <person name="Morris K."/>
            <person name="Mottagui-Tabar S."/>
            <person name="Mulder N."/>
            <person name="Nakano N."/>
            <person name="Nakauchi H."/>
            <person name="Ng P."/>
            <person name="Nilsson R."/>
            <person name="Nishiguchi S."/>
            <person name="Nishikawa S."/>
            <person name="Nori F."/>
            <person name="Ohara O."/>
            <person name="Okazaki Y."/>
            <person name="Orlando V."/>
            <person name="Pang K.C."/>
            <person name="Pavan W.J."/>
            <person name="Pavesi G."/>
            <person name="Pesole G."/>
            <person name="Petrovsky N."/>
            <person name="Piazza S."/>
            <person name="Reed J."/>
            <person name="Reid J.F."/>
            <person name="Ring B.Z."/>
            <person name="Ringwald M."/>
            <person name="Rost B."/>
            <person name="Ruan Y."/>
            <person name="Salzberg S.L."/>
            <person name="Sandelin A."/>
            <person name="Schneider C."/>
            <person name="Schoenbach C."/>
            <person name="Sekiguchi K."/>
            <person name="Semple C.A."/>
            <person name="Seno S."/>
            <person name="Sessa L."/>
            <person name="Sheng Y."/>
            <person name="Shibata Y."/>
            <person name="Shimada H."/>
            <person name="Shimada K."/>
            <person name="Silva D."/>
            <person name="Sinclair B."/>
            <person name="Sperling S."/>
            <person name="Stupka E."/>
            <person name="Sugiura K."/>
            <person name="Sultana R."/>
            <person name="Takenaka Y."/>
            <person name="Taki K."/>
            <person name="Tammoja K."/>
            <person name="Tan S.L."/>
            <person name="Tang S."/>
            <person name="Taylor M.S."/>
            <person name="Tegner J."/>
            <person name="Teichmann S.A."/>
            <person name="Ueda H.R."/>
            <person name="van Nimwegen E."/>
            <person name="Verardo R."/>
            <person name="Wei C.L."/>
            <person name="Yagi K."/>
            <person name="Yamanishi H."/>
            <person name="Zabarovsky E."/>
            <person name="Zhu S."/>
            <person name="Zimmer A."/>
            <person name="Hide W."/>
            <person name="Bult C."/>
            <person name="Grimmond S.M."/>
            <person name="Teasdale R.D."/>
            <person name="Liu E.T."/>
            <person name="Brusic V."/>
            <person name="Quackenbush J."/>
            <person name="Wahlestedt C."/>
            <person name="Mattick J.S."/>
            <person name="Hume D.A."/>
            <person name="Kai C."/>
            <person name="Sasaki D."/>
            <person name="Tomaru Y."/>
            <person name="Fukuda S."/>
            <person name="Kanamori-Katayama M."/>
            <person name="Suzuki M."/>
            <person name="Aoki J."/>
            <person name="Arakawa T."/>
            <person name="Iida J."/>
            <person name="Imamura K."/>
            <person name="Itoh M."/>
            <person name="Kato T."/>
            <person name="Kawaji H."/>
            <person name="Kawagashira N."/>
            <person name="Kawashima T."/>
            <person name="Kojima M."/>
            <person name="Kondo S."/>
            <person name="Konno H."/>
            <person name="Nakano K."/>
            <person name="Ninomiya N."/>
            <person name="Nishio T."/>
            <person name="Okada M."/>
            <person name="Plessy C."/>
            <person name="Shibata K."/>
            <person name="Shiraki T."/>
            <person name="Suzuki S."/>
            <person name="Tagami M."/>
            <person name="Waki K."/>
            <person name="Watahiki A."/>
            <person name="Okamura-Oho Y."/>
            <person name="Suzuki H."/>
            <person name="Kawai J."/>
            <person name="Hayashizaki Y."/>
        </authorList>
    </citation>
    <scope>NUCLEOTIDE SEQUENCE [LARGE SCALE MRNA]</scope>
    <source>
        <strain>C57BL/6J</strain>
        <tissue>Testis</tissue>
    </source>
</reference>
<reference key="2">
    <citation type="journal article" date="2004" name="Genome Res.">
        <title>The status, quality, and expansion of the NIH full-length cDNA project: the Mammalian Gene Collection (MGC).</title>
        <authorList>
            <consortium name="The MGC Project Team"/>
        </authorList>
    </citation>
    <scope>NUCLEOTIDE SEQUENCE [LARGE SCALE MRNA]</scope>
    <source>
        <tissue>Testis</tissue>
    </source>
</reference>
<protein>
    <recommendedName>
        <fullName>Ig-like V-type domain-containing protein FAM187A</fullName>
    </recommendedName>
</protein>
<name>F187A_MOUSE</name>
<accession>Q9D3R5</accession>
<accession>Q9D3Y8</accession>
<feature type="signal peptide" evidence="1">
    <location>
        <begin position="1"/>
        <end position="18"/>
    </location>
</feature>
<feature type="chain" id="PRO_0000340655" description="Ig-like V-type domain-containing protein FAM187A">
    <location>
        <begin position="19"/>
        <end position="417"/>
    </location>
</feature>
<feature type="topological domain" description="Extracellular" evidence="1">
    <location>
        <begin position="19"/>
        <end position="377"/>
    </location>
</feature>
<feature type="transmembrane region" description="Helical" evidence="1">
    <location>
        <begin position="378"/>
        <end position="398"/>
    </location>
</feature>
<feature type="topological domain" description="Cytoplasmic" evidence="1">
    <location>
        <begin position="399"/>
        <end position="417"/>
    </location>
</feature>
<feature type="domain" description="Ig-like V-type">
    <location>
        <begin position="268"/>
        <end position="362"/>
    </location>
</feature>
<feature type="glycosylation site" description="N-linked (GlcNAc...) asparagine" evidence="1">
    <location>
        <position position="248"/>
    </location>
</feature>
<feature type="glycosylation site" description="N-linked (GlcNAc...) asparagine" evidence="1">
    <location>
        <position position="318"/>
    </location>
</feature>
<feature type="disulfide bond" evidence="2">
    <location>
        <begin position="290"/>
        <end position="346"/>
    </location>
</feature>
<feature type="sequence conflict" description="In Ref. 1; BAB30509." evidence="3" ref="1">
    <original>T</original>
    <variation>I</variation>
    <location>
        <position position="121"/>
    </location>
</feature>
<gene>
    <name type="primary">Fam187a</name>
</gene>
<dbReference type="EMBL" id="AK016939">
    <property type="protein sequence ID" value="BAB30509.1"/>
    <property type="molecule type" value="mRNA"/>
</dbReference>
<dbReference type="EMBL" id="AK017119">
    <property type="protein sequence ID" value="BAB30607.1"/>
    <property type="molecule type" value="mRNA"/>
</dbReference>
<dbReference type="EMBL" id="BC116769">
    <property type="protein sequence ID" value="AAI16770.1"/>
    <property type="molecule type" value="mRNA"/>
</dbReference>
<dbReference type="EMBL" id="BC116771">
    <property type="protein sequence ID" value="AAI16772.1"/>
    <property type="molecule type" value="mRNA"/>
</dbReference>
<dbReference type="CCDS" id="CCDS48949.1"/>
<dbReference type="RefSeq" id="NP_080042.1">
    <property type="nucleotide sequence ID" value="NM_025766.2"/>
</dbReference>
<dbReference type="FunCoup" id="Q9D3R5">
    <property type="interactions" value="482"/>
</dbReference>
<dbReference type="STRING" id="10090.ENSMUSP00000097938"/>
<dbReference type="GlyCosmos" id="Q9D3R5">
    <property type="glycosylation" value="2 sites, No reported glycans"/>
</dbReference>
<dbReference type="GlyGen" id="Q9D3R5">
    <property type="glycosylation" value="2 sites"/>
</dbReference>
<dbReference type="SwissPalm" id="Q9D3R5"/>
<dbReference type="PaxDb" id="10090-ENSMUSP00000097938"/>
<dbReference type="ProteomicsDB" id="275986"/>
<dbReference type="Antibodypedia" id="8284">
    <property type="antibodies" value="4 antibodies from 4 providers"/>
</dbReference>
<dbReference type="Ensembl" id="ENSMUST00000100369.4">
    <property type="protein sequence ID" value="ENSMUSP00000097938.4"/>
    <property type="gene ID" value="ENSMUSG00000075510.4"/>
</dbReference>
<dbReference type="GeneID" id="66784"/>
<dbReference type="KEGG" id="mmu:66784"/>
<dbReference type="UCSC" id="uc007lsu.2">
    <property type="organism name" value="mouse"/>
</dbReference>
<dbReference type="AGR" id="MGI:1914034"/>
<dbReference type="CTD" id="100528020"/>
<dbReference type="MGI" id="MGI:1914034">
    <property type="gene designation" value="Fam187a"/>
</dbReference>
<dbReference type="VEuPathDB" id="HostDB:ENSMUSG00000075510"/>
<dbReference type="eggNOG" id="ENOG502QRCU">
    <property type="taxonomic scope" value="Eukaryota"/>
</dbReference>
<dbReference type="GeneTree" id="ENSGT00530000063991"/>
<dbReference type="HOGENOM" id="CLU_054403_0_0_1"/>
<dbReference type="InParanoid" id="Q9D3R5"/>
<dbReference type="OMA" id="AWDKDST"/>
<dbReference type="OrthoDB" id="9899560at2759"/>
<dbReference type="PhylomeDB" id="Q9D3R5"/>
<dbReference type="TreeFam" id="TF332178"/>
<dbReference type="BioGRID-ORCS" id="66784">
    <property type="hits" value="1 hit in 77 CRISPR screens"/>
</dbReference>
<dbReference type="PRO" id="PR:Q9D3R5"/>
<dbReference type="Proteomes" id="UP000000589">
    <property type="component" value="Chromosome 11"/>
</dbReference>
<dbReference type="RNAct" id="Q9D3R5">
    <property type="molecule type" value="protein"/>
</dbReference>
<dbReference type="Bgee" id="ENSMUSG00000075510">
    <property type="expression patterns" value="Expressed in spermatid and 16 other cell types or tissues"/>
</dbReference>
<dbReference type="GO" id="GO:0016020">
    <property type="term" value="C:membrane"/>
    <property type="evidence" value="ECO:0007669"/>
    <property type="project" value="UniProtKB-SubCell"/>
</dbReference>
<dbReference type="Gene3D" id="2.60.40.10">
    <property type="entry name" value="Immunoglobulins"/>
    <property type="match status" value="2"/>
</dbReference>
<dbReference type="InterPro" id="IPR039311">
    <property type="entry name" value="FAM187A/B"/>
</dbReference>
<dbReference type="InterPro" id="IPR007110">
    <property type="entry name" value="Ig-like_dom"/>
</dbReference>
<dbReference type="InterPro" id="IPR036179">
    <property type="entry name" value="Ig-like_dom_sf"/>
</dbReference>
<dbReference type="InterPro" id="IPR013783">
    <property type="entry name" value="Ig-like_fold"/>
</dbReference>
<dbReference type="InterPro" id="IPR013106">
    <property type="entry name" value="Ig_V-set"/>
</dbReference>
<dbReference type="PANTHER" id="PTHR32178">
    <property type="entry name" value="FAM187"/>
    <property type="match status" value="1"/>
</dbReference>
<dbReference type="PANTHER" id="PTHR32178:SF7">
    <property type="entry name" value="IG-LIKE V-TYPE DOMAIN-CONTAINING PROTEIN FAM187A"/>
    <property type="match status" value="1"/>
</dbReference>
<dbReference type="Pfam" id="PF07686">
    <property type="entry name" value="V-set"/>
    <property type="match status" value="1"/>
</dbReference>
<dbReference type="SUPFAM" id="SSF48726">
    <property type="entry name" value="Immunoglobulin"/>
    <property type="match status" value="2"/>
</dbReference>
<dbReference type="PROSITE" id="PS50835">
    <property type="entry name" value="IG_LIKE"/>
    <property type="match status" value="1"/>
</dbReference>
<keyword id="KW-1015">Disulfide bond</keyword>
<keyword id="KW-0325">Glycoprotein</keyword>
<keyword id="KW-0393">Immunoglobulin domain</keyword>
<keyword id="KW-0472">Membrane</keyword>
<keyword id="KW-1185">Reference proteome</keyword>
<keyword id="KW-0732">Signal</keyword>
<keyword id="KW-0812">Transmembrane</keyword>
<keyword id="KW-1133">Transmembrane helix</keyword>